<reference key="1">
    <citation type="journal article" date="1992" name="J. Bacteriol.">
        <title>The 14,000-molecular-weight antigen of Mycobacterium tuberculosis is related to the alpha-crystallin family of low-molecular-weight heat shock proteins.</title>
        <authorList>
            <person name="Verbon A."/>
            <person name="Hartskeerl R.A."/>
            <person name="Schuitema A."/>
            <person name="Kolk A.H.J."/>
            <person name="Young D.B."/>
            <person name="Lathigra R."/>
        </authorList>
    </citation>
    <scope>NUCLEOTIDE SEQUENCE [GENOMIC DNA]</scope>
    <source>
        <strain>ATCC 25618 / H37Rv</strain>
    </source>
</reference>
<reference key="2">
    <citation type="journal article" date="1998" name="Nature">
        <title>Deciphering the biology of Mycobacterium tuberculosis from the complete genome sequence.</title>
        <authorList>
            <person name="Cole S.T."/>
            <person name="Brosch R."/>
            <person name="Parkhill J."/>
            <person name="Garnier T."/>
            <person name="Churcher C.M."/>
            <person name="Harris D.E."/>
            <person name="Gordon S.V."/>
            <person name="Eiglmeier K."/>
            <person name="Gas S."/>
            <person name="Barry C.E. III"/>
            <person name="Tekaia F."/>
            <person name="Badcock K."/>
            <person name="Basham D."/>
            <person name="Brown D."/>
            <person name="Chillingworth T."/>
            <person name="Connor R."/>
            <person name="Davies R.M."/>
            <person name="Devlin K."/>
            <person name="Feltwell T."/>
            <person name="Gentles S."/>
            <person name="Hamlin N."/>
            <person name="Holroyd S."/>
            <person name="Hornsby T."/>
            <person name="Jagels K."/>
            <person name="Krogh A."/>
            <person name="McLean J."/>
            <person name="Moule S."/>
            <person name="Murphy L.D."/>
            <person name="Oliver S."/>
            <person name="Osborne J."/>
            <person name="Quail M.A."/>
            <person name="Rajandream M.A."/>
            <person name="Rogers J."/>
            <person name="Rutter S."/>
            <person name="Seeger K."/>
            <person name="Skelton S."/>
            <person name="Squares S."/>
            <person name="Squares R."/>
            <person name="Sulston J.E."/>
            <person name="Taylor K."/>
            <person name="Whitehead S."/>
            <person name="Barrell B.G."/>
        </authorList>
    </citation>
    <scope>NUCLEOTIDE SEQUENCE [LARGE SCALE GENOMIC DNA]</scope>
    <source>
        <strain>ATCC 25618 / H37Rv</strain>
    </source>
</reference>
<reference key="3">
    <citation type="journal article" date="1992" name="Infect. Immun.">
        <title>Characterization of the major membrane protein of virulent Mycobacterium tuberculosis.</title>
        <authorList>
            <person name="Lee B.-Y."/>
            <person name="Hefta S.A."/>
            <person name="Brennan P.J."/>
        </authorList>
    </citation>
    <scope>PROTEIN SEQUENCE OF 2-144</scope>
    <scope>CHARACTERIZATION</scope>
    <scope>SUBCELLULAR LOCATION</scope>
    <scope>MASS SPECTROMETRY</scope>
    <source>
        <strain>ATCC 35801 / TMC 107 / Erdman</strain>
    </source>
</reference>
<reference key="4">
    <citation type="journal article" date="1999" name="Infect. Immun.">
        <title>Response to reactive nitrogen intermediates in Mycobacterium tuberculosis: induction of the 16-kilodalton alpha-crystallin homolog by exposure to nitric oxide donors.</title>
        <authorList>
            <person name="Garbe T.R."/>
            <person name="Hibler N.S."/>
            <person name="Deretic V."/>
        </authorList>
    </citation>
    <scope>PROTEIN SEQUENCE OF 2-13</scope>
    <scope>INDUCTION BY NITRIC OXIDE (NO)</scope>
    <source>
        <strain>ATCC 25618 / H37Rv</strain>
    </source>
</reference>
<reference key="5">
    <citation type="journal article" date="1996" name="J. Bacteriol.">
        <title>Stationary phase-associated protein expression in Mycobacterium tuberculosis: function of the mycobacterial alpha-crystallin homolog.</title>
        <authorList>
            <person name="Yuan Y."/>
            <person name="Crane D.D."/>
            <person name="Barry C.E. III"/>
        </authorList>
    </citation>
    <scope>FUNCTION AS A CHAPERONE</scope>
    <scope>INDUCTION IN STATIONARY PHASE</scope>
    <scope>INDUCTION BY HYPOXIA</scope>
    <source>
        <strain>ATCC 27294 / TMC 102 / H37Rv</strain>
    </source>
</reference>
<reference key="6">
    <citation type="journal article" date="2001" name="Proc. Natl. Acad. Sci. U.S.A.">
        <title>Regulation of the Mycobacterium tuberculosis hypoxic response gene encoding alpha -crystallin.</title>
        <authorList>
            <person name="Sherman D.R."/>
            <person name="Voskuil M."/>
            <person name="Schnappinger D."/>
            <person name="Liao R."/>
            <person name="Harrell M.I."/>
            <person name="Schoolnik G.K."/>
        </authorList>
    </citation>
    <scope>INDUCTION BY HYPOXIA</scope>
    <source>
        <strain>ATCC 25618 / H37Rv</strain>
    </source>
</reference>
<reference key="7">
    <citation type="journal article" date="2002" name="J. Bacteriol.">
        <title>Hypoxic response of Mycobacterium tuberculosis studied by metabolic labeling and proteome analysis of cellular and extracellular proteins.</title>
        <authorList>
            <person name="Rosenkrands I."/>
            <person name="Slayden R.A."/>
            <person name="Crawford J."/>
            <person name="Aagaard C."/>
            <person name="Barry C.E. III"/>
            <person name="Andersen P."/>
        </authorList>
    </citation>
    <scope>IDENTIFICATION BY MASS SPECTROMETRY</scope>
    <scope>MULTIPLE FORMS</scope>
    <scope>INDUCTION BY HYPOXIA</scope>
    <source>
        <strain>ATCC 25618 / H37Rv</strain>
    </source>
</reference>
<reference key="8">
    <citation type="journal article" date="2003" name="J. Exp. Med.">
        <title>Inhibition of respiration by nitric oxide induces a Mycobacterium tuberculosis dormancy program.</title>
        <authorList>
            <person name="Voskuil M.I."/>
            <person name="Schnappinger D."/>
            <person name="Visconti K.C."/>
            <person name="Harrell M.I."/>
            <person name="Dolganov G.M."/>
            <person name="Sherman D.R."/>
            <person name="Schoolnik G.K."/>
        </authorList>
    </citation>
    <scope>INDUCTION BY NITRIC OXIDE (NO); BY HYPOXIA; IN MOUSE MODEL AND DORMANCY REGULON</scope>
    <source>
        <strain>ATCC 25618 / H37Rv</strain>
    </source>
</reference>
<reference key="9">
    <citation type="journal article" date="2003" name="Proc. Natl. Acad. Sci. U.S.A.">
        <title>Expression of Th1-mediated immunity in mouse lungs induces a Mycobacterium tuberculosis transcription pattern characteristic of nonreplicating persistence.</title>
        <authorList>
            <person name="Shi L."/>
            <person name="Jung Y.J."/>
            <person name="Tyagi S."/>
            <person name="Gennaro M.L."/>
            <person name="North R.J."/>
        </authorList>
    </citation>
    <scope>INDUCTION BY HOST IMMUNITY</scope>
    <source>
        <strain>ATCC 25618 / H37Rv</strain>
    </source>
</reference>
<reference key="10">
    <citation type="journal article" date="2004" name="Microbiology">
        <title>Comparative proteome analysis of Mycobacterium tuberculosis grown under aerobic and anaerobic conditions.</title>
        <authorList>
            <person name="Starck J."/>
            <person name="Kallenius G."/>
            <person name="Marklund B.I."/>
            <person name="Andersson D.I."/>
            <person name="Akerlund T."/>
        </authorList>
    </citation>
    <scope>INDUCTION BY ANAEROBISIS</scope>
    <scope>IDENTIFICATION BY MASS SPECTROMETRY</scope>
    <source>
        <strain>S-02293 Harlingen</strain>
    </source>
</reference>
<reference key="11">
    <citation type="journal article" date="2006" name="Infect. Immun.">
        <title>Deletion of the Mycobacterium tuberculosis alpha-crystallin-like hspX gene causes increased bacterial growth in vivo.</title>
        <authorList>
            <person name="Hu Y."/>
            <person name="Movahedzadeh F."/>
            <person name="Stoker N.G."/>
            <person name="Coates A.R."/>
        </authorList>
    </citation>
    <scope>DISRUPTION PHENOTYPE</scope>
    <scope>PROBABLE OPERON STRUCTURE</scope>
    <source>
        <strain>ATCC 25618 / H37Rv</strain>
    </source>
</reference>
<reference key="12">
    <citation type="journal article" date="2007" name="Infect. Immun.">
        <title>Immunogenicity of eight dormancy regulon-encoded proteins of Mycobacterium tuberculosis in DNA-vaccinated and tuberculosis-infected mice.</title>
        <authorList>
            <person name="Roupie V."/>
            <person name="Romano M."/>
            <person name="Zhang L."/>
            <person name="Korf H."/>
            <person name="Lin M.Y."/>
            <person name="Franken K.L."/>
            <person name="Ottenhoff T.H."/>
            <person name="Klein M.R."/>
            <person name="Huygen K."/>
        </authorList>
    </citation>
    <scope>BIOTECHNOLOGY</scope>
    <source>
        <strain>ATCC 25618 / H37Rv</strain>
    </source>
</reference>
<reference key="13">
    <citation type="journal article" date="2007" name="Proc. Natl. Acad. Sci. U.S.A.">
        <title>Mycobacterium tuberculosis DosS is a redox sensor and DosT is a hypoxia sensor.</title>
        <authorList>
            <person name="Kumar A."/>
            <person name="Toledo J.C."/>
            <person name="Patel R.P."/>
            <person name="Lancaster J.R. Jr."/>
            <person name="Steyn A.J."/>
        </authorList>
    </citation>
    <scope>INDUCTION BY CARBON MONOXIDE (CO)</scope>
    <source>
        <strain>ATCC 25618 / H37Rv</strain>
    </source>
</reference>
<reference key="14">
    <citation type="journal article" date="2008" name="Cell Host Microbe">
        <title>Mycobacterium tuberculosis senses host-derived carbon monoxide during macrophage infection.</title>
        <authorList>
            <person name="Shiloh M.U."/>
            <person name="Manzanillo P."/>
            <person name="Cox J.S."/>
        </authorList>
    </citation>
    <scope>INDUCTION BY CARBON MONOXIDE (CO)</scope>
    <source>
        <strain>ATCC 35801 / TMC 107 / Erdman</strain>
    </source>
</reference>
<reference key="15">
    <citation type="journal article" date="2008" name="J. Biol. Chem.">
        <title>Heme oxygenase-1-derived carbon monoxide induces the Mycobacterium tuberculosis dormancy regulon.</title>
        <authorList>
            <person name="Kumar A."/>
            <person name="Deshane J.S."/>
            <person name="Crossman D.K."/>
            <person name="Bolisetty S."/>
            <person name="Yan B.S."/>
            <person name="Kramnik I."/>
            <person name="Agarwal A."/>
            <person name="Steyn A.J."/>
        </authorList>
    </citation>
    <scope>INDUCTION BY CARBON MONOXIDE (CO)</scope>
    <scope>DORMANCY REGULON</scope>
    <source>
        <strain>ATCC 25618 / H37Rv</strain>
    </source>
</reference>
<reference key="16">
    <citation type="journal article" date="2010" name="PLoS ONE">
        <title>Prokaryotic ubiquitin-like protein (Pup) proteome of Mycobacterium tuberculosis.</title>
        <authorList>
            <person name="Festa R.A."/>
            <person name="McAllister F."/>
            <person name="Pearce M.J."/>
            <person name="Mintseris J."/>
            <person name="Burns K.E."/>
            <person name="Gygi S.P."/>
            <person name="Darwin K.H."/>
        </authorList>
    </citation>
    <scope>PUPYLATION AT LYS-64; LYS-85; LYS-114 AND LYS-132</scope>
    <scope>IDENTIFICATION BY MASS SPECTROMETRY</scope>
    <source>
        <strain>ATCC 25618 / H37Rv</strain>
    </source>
</reference>
<reference key="17">
    <citation type="journal article" date="2011" name="Mol. Cell. Proteomics">
        <title>Proteogenomic analysis of Mycobacterium tuberculosis by high resolution mass spectrometry.</title>
        <authorList>
            <person name="Kelkar D.S."/>
            <person name="Kumar D."/>
            <person name="Kumar P."/>
            <person name="Balakrishnan L."/>
            <person name="Muthusamy B."/>
            <person name="Yadav A.K."/>
            <person name="Shrivastava P."/>
            <person name="Marimuthu A."/>
            <person name="Anand S."/>
            <person name="Sundaram H."/>
            <person name="Kingsbury R."/>
            <person name="Harsha H.C."/>
            <person name="Nair B."/>
            <person name="Prasad T.S."/>
            <person name="Chauhan D.S."/>
            <person name="Katoch K."/>
            <person name="Katoch V.M."/>
            <person name="Kumar P."/>
            <person name="Chaerkady R."/>
            <person name="Ramachandran S."/>
            <person name="Dash D."/>
            <person name="Pandey A."/>
        </authorList>
    </citation>
    <scope>IDENTIFICATION BY MASS SPECTROMETRY [LARGE SCALE ANALYSIS]</scope>
    <source>
        <strain>ATCC 25618 / H37Rv</strain>
    </source>
</reference>
<dbReference type="EMBL" id="S79751">
    <property type="protein sequence ID" value="AAB21317.1"/>
    <property type="molecule type" value="Genomic_DNA"/>
</dbReference>
<dbReference type="EMBL" id="M76712">
    <property type="protein sequence ID" value="AAA25342.1"/>
    <property type="molecule type" value="Genomic_DNA"/>
</dbReference>
<dbReference type="EMBL" id="AL123456">
    <property type="protein sequence ID" value="CCP44804.1"/>
    <property type="molecule type" value="Genomic_DNA"/>
</dbReference>
<dbReference type="PIR" id="F70942">
    <property type="entry name" value="F70942"/>
</dbReference>
<dbReference type="RefSeq" id="NP_216547.1">
    <property type="nucleotide sequence ID" value="NC_000962.3"/>
</dbReference>
<dbReference type="RefSeq" id="WP_003410189.1">
    <property type="nucleotide sequence ID" value="NZ_NVQJ01000046.1"/>
</dbReference>
<dbReference type="SMR" id="P9WMK1"/>
<dbReference type="FunCoup" id="P9WMK1">
    <property type="interactions" value="4"/>
</dbReference>
<dbReference type="IntAct" id="P9WMK1">
    <property type="interactions" value="6"/>
</dbReference>
<dbReference type="STRING" id="83332.Rv2031c"/>
<dbReference type="MetOSite" id="P9WMK1"/>
<dbReference type="PaxDb" id="83332-Rv2031c"/>
<dbReference type="DNASU" id="887579"/>
<dbReference type="GeneID" id="887579"/>
<dbReference type="KEGG" id="mtu:Rv2031c"/>
<dbReference type="KEGG" id="mtv:RVBD_2031c"/>
<dbReference type="TubercuList" id="Rv2031c"/>
<dbReference type="eggNOG" id="COG0071">
    <property type="taxonomic scope" value="Bacteria"/>
</dbReference>
<dbReference type="InParanoid" id="P9WMK1"/>
<dbReference type="OrthoDB" id="3855217at2"/>
<dbReference type="PhylomeDB" id="P9WMK1"/>
<dbReference type="PHI-base" id="PHI:4496"/>
<dbReference type="Proteomes" id="UP000001584">
    <property type="component" value="Chromosome"/>
</dbReference>
<dbReference type="GO" id="GO:0005829">
    <property type="term" value="C:cytosol"/>
    <property type="evidence" value="ECO:0007005"/>
    <property type="project" value="MTBBASE"/>
</dbReference>
<dbReference type="GO" id="GO:0005576">
    <property type="term" value="C:extracellular region"/>
    <property type="evidence" value="ECO:0007669"/>
    <property type="project" value="UniProtKB-KW"/>
</dbReference>
<dbReference type="GO" id="GO:0009274">
    <property type="term" value="C:peptidoglycan-based cell wall"/>
    <property type="evidence" value="ECO:0007005"/>
    <property type="project" value="MTBBASE"/>
</dbReference>
<dbReference type="GO" id="GO:0005886">
    <property type="term" value="C:plasma membrane"/>
    <property type="evidence" value="ECO:0000314"/>
    <property type="project" value="MTBBASE"/>
</dbReference>
<dbReference type="GO" id="GO:0044183">
    <property type="term" value="F:protein folding chaperone"/>
    <property type="evidence" value="ECO:0000314"/>
    <property type="project" value="MTBBASE"/>
</dbReference>
<dbReference type="GO" id="GO:0051082">
    <property type="term" value="F:unfolded protein binding"/>
    <property type="evidence" value="ECO:0000318"/>
    <property type="project" value="GO_Central"/>
</dbReference>
<dbReference type="GO" id="GO:0071456">
    <property type="term" value="P:cellular response to hypoxia"/>
    <property type="evidence" value="ECO:0000270"/>
    <property type="project" value="MTBBASE"/>
</dbReference>
<dbReference type="GO" id="GO:0009267">
    <property type="term" value="P:cellular response to starvation"/>
    <property type="evidence" value="ECO:0000270"/>
    <property type="project" value="MTBBASE"/>
</dbReference>
<dbReference type="GO" id="GO:0045926">
    <property type="term" value="P:negative regulation of growth"/>
    <property type="evidence" value="ECO:0000315"/>
    <property type="project" value="MTBBASE"/>
</dbReference>
<dbReference type="GO" id="GO:0051259">
    <property type="term" value="P:protein complex oligomerization"/>
    <property type="evidence" value="ECO:0000318"/>
    <property type="project" value="GO_Central"/>
</dbReference>
<dbReference type="GO" id="GO:0006457">
    <property type="term" value="P:protein folding"/>
    <property type="evidence" value="ECO:0000314"/>
    <property type="project" value="MTBBASE"/>
</dbReference>
<dbReference type="GO" id="GO:0009408">
    <property type="term" value="P:response to heat"/>
    <property type="evidence" value="ECO:0000314"/>
    <property type="project" value="MTBBASE"/>
</dbReference>
<dbReference type="GO" id="GO:0075136">
    <property type="term" value="P:response to host"/>
    <property type="evidence" value="ECO:0000270"/>
    <property type="project" value="MTBBASE"/>
</dbReference>
<dbReference type="GO" id="GO:0042542">
    <property type="term" value="P:response to hydrogen peroxide"/>
    <property type="evidence" value="ECO:0000318"/>
    <property type="project" value="GO_Central"/>
</dbReference>
<dbReference type="GO" id="GO:0001666">
    <property type="term" value="P:response to hypoxia"/>
    <property type="evidence" value="ECO:0000314"/>
    <property type="project" value="MTBBASE"/>
</dbReference>
<dbReference type="GO" id="GO:0010039">
    <property type="term" value="P:response to iron ion"/>
    <property type="evidence" value="ECO:0000270"/>
    <property type="project" value="MTBBASE"/>
</dbReference>
<dbReference type="GO" id="GO:0051409">
    <property type="term" value="P:response to nitrosative stress"/>
    <property type="evidence" value="ECO:0000270"/>
    <property type="project" value="MTBBASE"/>
</dbReference>
<dbReference type="GO" id="GO:0009651">
    <property type="term" value="P:response to salt stress"/>
    <property type="evidence" value="ECO:0000318"/>
    <property type="project" value="GO_Central"/>
</dbReference>
<dbReference type="CDD" id="cd06464">
    <property type="entry name" value="ACD_sHsps-like"/>
    <property type="match status" value="1"/>
</dbReference>
<dbReference type="Gene3D" id="2.60.40.790">
    <property type="match status" value="1"/>
</dbReference>
<dbReference type="InterPro" id="IPR002068">
    <property type="entry name" value="A-crystallin/Hsp20_dom"/>
</dbReference>
<dbReference type="InterPro" id="IPR008978">
    <property type="entry name" value="HSP20-like_chaperone"/>
</dbReference>
<dbReference type="InterPro" id="IPR031107">
    <property type="entry name" value="Small_HSP"/>
</dbReference>
<dbReference type="PANTHER" id="PTHR11527">
    <property type="entry name" value="HEAT-SHOCK PROTEIN 20 FAMILY MEMBER"/>
    <property type="match status" value="1"/>
</dbReference>
<dbReference type="Pfam" id="PF00011">
    <property type="entry name" value="HSP20"/>
    <property type="match status" value="1"/>
</dbReference>
<dbReference type="SUPFAM" id="SSF49764">
    <property type="entry name" value="HSP20-like chaperones"/>
    <property type="match status" value="1"/>
</dbReference>
<dbReference type="PROSITE" id="PS01031">
    <property type="entry name" value="SHSP"/>
    <property type="match status" value="1"/>
</dbReference>
<proteinExistence type="evidence at protein level"/>
<name>ACR_MYCTU</name>
<accession>P9WMK1</accession>
<accession>L0TBA7</accession>
<accession>P0A5B7</accession>
<accession>P30223</accession>
<sequence>MATTLPVQRHPRSLFPEFSELFAAFPSFAGLRPTFDTRLMRLEDEMKEGRYEVRAELPGVDPDKDVDIMVRDGQLTIKAERTEQKDFDGRSEFAYGSFVRTVSLPVGADEDDIKATYDKGILTVSVAVSEGKPTEKHIQIRSTN</sequence>
<protein>
    <recommendedName>
        <fullName>Alpha-crystallin</fullName>
        <shortName>Acr</shortName>
    </recommendedName>
    <alternativeName>
        <fullName>14 kDa antigen</fullName>
    </alternativeName>
    <alternativeName>
        <fullName>16 kDa antigen</fullName>
    </alternativeName>
    <alternativeName>
        <fullName>HSP 16.3</fullName>
    </alternativeName>
    <alternativeName>
        <fullName>Nox16</fullName>
    </alternativeName>
</protein>
<evidence type="ECO:0000255" key="1">
    <source>
        <dbReference type="PROSITE-ProRule" id="PRU00285"/>
    </source>
</evidence>
<evidence type="ECO:0000269" key="2">
    <source>
    </source>
</evidence>
<evidence type="ECO:0000269" key="3">
    <source>
    </source>
</evidence>
<evidence type="ECO:0000269" key="4">
    <source>
    </source>
</evidence>
<evidence type="ECO:0000269" key="5">
    <source>
    </source>
</evidence>
<evidence type="ECO:0000269" key="6">
    <source>
    </source>
</evidence>
<evidence type="ECO:0000269" key="7">
    <source>
    </source>
</evidence>
<evidence type="ECO:0000269" key="8">
    <source>
    </source>
</evidence>
<evidence type="ECO:0000269" key="9">
    <source>
    </source>
</evidence>
<evidence type="ECO:0000269" key="10">
    <source>
    </source>
</evidence>
<evidence type="ECO:0000269" key="11">
    <source>
    </source>
</evidence>
<evidence type="ECO:0000269" key="12">
    <source>
    </source>
</evidence>
<evidence type="ECO:0000269" key="13">
    <source>
    </source>
</evidence>
<evidence type="ECO:0000269" key="14">
    <source>
    </source>
</evidence>
<evidence type="ECO:0000269" key="15">
    <source>
    </source>
</evidence>
<comment type="function">
    <text evidence="14">Acts as a chaperone, as it has a significant ability to suppress the thermal denaturation of alcohol dehydrogenase. Cells overexpressing this gene grow more slowly than wild-type cells, and are less susceptible to autolysis following saturation of the culture in vitro, suggesting this protein may slow down the growth rate of M.tuberculosis in culture and by extension during macrophage infection.</text>
</comment>
<comment type="interaction">
    <interactant intactId="EBI-2945921">
        <id>P9WMK1</id>
    </interactant>
    <interactant intactId="EBI-2945875">
        <id>P9WI75</id>
        <label>pknF</label>
    </interactant>
    <organismsDiffer>false</organismsDiffer>
    <experiments>2</experiments>
</comment>
<comment type="subcellular location">
    <subcellularLocation>
        <location evidence="7">Cytoplasm</location>
    </subcellularLocation>
    <subcellularLocation>
        <location evidence="7">Secreted</location>
        <location evidence="7">Cell wall</location>
    </subcellularLocation>
    <text>Probably the external side of the cell wall; the protein is very abundant in older organisms and surface coating could be the result of autolysis of older organisms.</text>
</comment>
<comment type="induction">
    <text evidence="2 3 4 5 6 10 11 12 14 15">Induced by several reactive nitrogen intermediates including S-nitroso glutathione (at protein level). Induced in stationary phase (at protein level). A member of the dormancy regulon. Induced in response to reduced oxygen tension (hypoxia) (at protein level), low levels of nitric oxide (NO) and carbon monoxide (CO). It is hoped that this regulon will give insight into the latent, or dormant phase of infection. Induced in mouse lungs at the same time that adaptive host immunity induces bacterial growth arrest; induction is dependent on interferon gamma. A member of the probable hspX-Rv2030c-pfkB-Rv2028c operon.</text>
</comment>
<comment type="PTM">
    <text>Multiple forms of this protein exist in 2D-gels. The differences between them has not been examined.</text>
</comment>
<comment type="mass spectrometry"/>
<comment type="disruption phenotype">
    <text evidence="8">Strains deleted for this gene show hypervirulence upon intravenous inoculation in BALB/c mice.</text>
</comment>
<comment type="biotechnology">
    <text evidence="9">In plasmid DNA-vaccinated mice, subsequent challenge with this protein induces positive levels of antigen-specific IFN-gamma and IL-2, indicating this might be a good vaccine candidate.</text>
</comment>
<comment type="similarity">
    <text evidence="1">Belongs to the small heat shock protein (HSP20) family.</text>
</comment>
<feature type="initiator methionine" description="Removed" evidence="7 15">
    <location>
        <position position="1"/>
    </location>
</feature>
<feature type="chain" id="PRO_0000126011" description="Alpha-crystallin">
    <location>
        <begin position="2"/>
        <end position="144"/>
    </location>
</feature>
<feature type="domain" description="sHSP" evidence="1">
    <location>
        <begin position="33"/>
        <end position="143"/>
    </location>
</feature>
<feature type="cross-link" description="Isoglutamyl lysine isopeptide (Lys-Gln) (interchain with Q-Cter in protein Pup)" evidence="13">
    <location>
        <position position="64"/>
    </location>
</feature>
<feature type="cross-link" description="Isoglutamyl lysine isopeptide (Lys-Gln) (interchain with Q-Cter in protein Pup)" evidence="13">
    <location>
        <position position="85"/>
    </location>
</feature>
<feature type="cross-link" description="Isoglutamyl lysine isopeptide (Lys-Gln) (interchain with Q-Cter in protein Pup)" evidence="13">
    <location>
        <position position="114"/>
    </location>
</feature>
<feature type="cross-link" description="Isoglutamyl lysine isopeptide (Lys-Gln) (interchain with Q-Cter in protein Pup)" evidence="13">
    <location>
        <position position="132"/>
    </location>
</feature>
<organism>
    <name type="scientific">Mycobacterium tuberculosis (strain ATCC 25618 / H37Rv)</name>
    <dbReference type="NCBI Taxonomy" id="83332"/>
    <lineage>
        <taxon>Bacteria</taxon>
        <taxon>Bacillati</taxon>
        <taxon>Actinomycetota</taxon>
        <taxon>Actinomycetes</taxon>
        <taxon>Mycobacteriales</taxon>
        <taxon>Mycobacteriaceae</taxon>
        <taxon>Mycobacterium</taxon>
        <taxon>Mycobacterium tuberculosis complex</taxon>
    </lineage>
</organism>
<keyword id="KW-0134">Cell wall</keyword>
<keyword id="KW-0143">Chaperone</keyword>
<keyword id="KW-0963">Cytoplasm</keyword>
<keyword id="KW-0903">Direct protein sequencing</keyword>
<keyword id="KW-1017">Isopeptide bond</keyword>
<keyword id="KW-1185">Reference proteome</keyword>
<keyword id="KW-0964">Secreted</keyword>
<keyword id="KW-0832">Ubl conjugation</keyword>
<gene>
    <name type="primary">hspX</name>
    <name type="synonym">acr</name>
    <name type="ordered locus">Rv2031c</name>
    <name type="ORF">MTV018.18c</name>
</gene>